<accession>B8JBQ0</accession>
<sequence length="484" mass="52245">MPLSDFQVVIGLEVHAQLLTRSKIFCGCSTAFGGAPNAHTCPVCLGLPGALPALNRAVVEMAVRTGLALGCEIRPKSVFARKNYFYPDLPKGYQISQYELPICEGGEVTFTLEGRDHTARLVRIHMEEDAGKNVHDVSADGASGVDLNRAGVPLVEIVSRPDLRSAEEAVEYLKALRAILMALGVNDGNMQEGSLRCDANVSVMRKGASELGTRCEIKNMNSFRFLKQAIEFEARRQVELIEAGEPVVQETRLFDPDRGETRSMRSKEEAHDYRYFPEPDLPPVIVEAALVERIRGELPELPRARAERYQRRLGLSAYDAGNLVADAAVAAWFDAALGAYGAGPEAAKKVANWVTGELARLANETGEAPAAWKMTPARLAAVLRLVDAGTIGGPGAKQVVEEVFRTGAEPDAVVKAKGLAQVSDEGAIEAAVDKVLAANPGEAEKYRGGRKNLLGFFVGQVMKEMRGKGNPAVVNALLRRKLGD</sequence>
<reference key="1">
    <citation type="submission" date="2009-01" db="EMBL/GenBank/DDBJ databases">
        <title>Complete sequence of Anaeromyxobacter dehalogenans 2CP-1.</title>
        <authorList>
            <person name="Lucas S."/>
            <person name="Copeland A."/>
            <person name="Lapidus A."/>
            <person name="Glavina del Rio T."/>
            <person name="Dalin E."/>
            <person name="Tice H."/>
            <person name="Bruce D."/>
            <person name="Goodwin L."/>
            <person name="Pitluck S."/>
            <person name="Saunders E."/>
            <person name="Brettin T."/>
            <person name="Detter J.C."/>
            <person name="Han C."/>
            <person name="Larimer F."/>
            <person name="Land M."/>
            <person name="Hauser L."/>
            <person name="Kyrpides N."/>
            <person name="Ovchinnikova G."/>
            <person name="Beliaev A.S."/>
            <person name="Richardson P."/>
        </authorList>
    </citation>
    <scope>NUCLEOTIDE SEQUENCE [LARGE SCALE GENOMIC DNA]</scope>
    <source>
        <strain>2CP-1 / ATCC BAA-258</strain>
    </source>
</reference>
<keyword id="KW-0067">ATP-binding</keyword>
<keyword id="KW-0436">Ligase</keyword>
<keyword id="KW-0547">Nucleotide-binding</keyword>
<keyword id="KW-0648">Protein biosynthesis</keyword>
<comment type="function">
    <text evidence="1">Allows the formation of correctly charged Asn-tRNA(Asn) or Gln-tRNA(Gln) through the transamidation of misacylated Asp-tRNA(Asn) or Glu-tRNA(Gln) in organisms which lack either or both of asparaginyl-tRNA or glutaminyl-tRNA synthetases. The reaction takes place in the presence of glutamine and ATP through an activated phospho-Asp-tRNA(Asn) or phospho-Glu-tRNA(Gln).</text>
</comment>
<comment type="catalytic activity">
    <reaction evidence="1">
        <text>L-glutamyl-tRNA(Gln) + L-glutamine + ATP + H2O = L-glutaminyl-tRNA(Gln) + L-glutamate + ADP + phosphate + H(+)</text>
        <dbReference type="Rhea" id="RHEA:17521"/>
        <dbReference type="Rhea" id="RHEA-COMP:9681"/>
        <dbReference type="Rhea" id="RHEA-COMP:9684"/>
        <dbReference type="ChEBI" id="CHEBI:15377"/>
        <dbReference type="ChEBI" id="CHEBI:15378"/>
        <dbReference type="ChEBI" id="CHEBI:29985"/>
        <dbReference type="ChEBI" id="CHEBI:30616"/>
        <dbReference type="ChEBI" id="CHEBI:43474"/>
        <dbReference type="ChEBI" id="CHEBI:58359"/>
        <dbReference type="ChEBI" id="CHEBI:78520"/>
        <dbReference type="ChEBI" id="CHEBI:78521"/>
        <dbReference type="ChEBI" id="CHEBI:456216"/>
    </reaction>
</comment>
<comment type="catalytic activity">
    <reaction evidence="1">
        <text>L-aspartyl-tRNA(Asn) + L-glutamine + ATP + H2O = L-asparaginyl-tRNA(Asn) + L-glutamate + ADP + phosphate + 2 H(+)</text>
        <dbReference type="Rhea" id="RHEA:14513"/>
        <dbReference type="Rhea" id="RHEA-COMP:9674"/>
        <dbReference type="Rhea" id="RHEA-COMP:9677"/>
        <dbReference type="ChEBI" id="CHEBI:15377"/>
        <dbReference type="ChEBI" id="CHEBI:15378"/>
        <dbReference type="ChEBI" id="CHEBI:29985"/>
        <dbReference type="ChEBI" id="CHEBI:30616"/>
        <dbReference type="ChEBI" id="CHEBI:43474"/>
        <dbReference type="ChEBI" id="CHEBI:58359"/>
        <dbReference type="ChEBI" id="CHEBI:78515"/>
        <dbReference type="ChEBI" id="CHEBI:78516"/>
        <dbReference type="ChEBI" id="CHEBI:456216"/>
    </reaction>
</comment>
<comment type="subunit">
    <text evidence="1">Heterotrimer of A, B and C subunits.</text>
</comment>
<comment type="similarity">
    <text evidence="1">Belongs to the GatB/GatE family. GatB subfamily.</text>
</comment>
<organism>
    <name type="scientific">Anaeromyxobacter dehalogenans (strain 2CP-1 / ATCC BAA-258)</name>
    <dbReference type="NCBI Taxonomy" id="455488"/>
    <lineage>
        <taxon>Bacteria</taxon>
        <taxon>Pseudomonadati</taxon>
        <taxon>Myxococcota</taxon>
        <taxon>Myxococcia</taxon>
        <taxon>Myxococcales</taxon>
        <taxon>Cystobacterineae</taxon>
        <taxon>Anaeromyxobacteraceae</taxon>
        <taxon>Anaeromyxobacter</taxon>
    </lineage>
</organism>
<evidence type="ECO:0000255" key="1">
    <source>
        <dbReference type="HAMAP-Rule" id="MF_00121"/>
    </source>
</evidence>
<dbReference type="EC" id="6.3.5.-" evidence="1"/>
<dbReference type="EMBL" id="CP001359">
    <property type="protein sequence ID" value="ACL67658.1"/>
    <property type="molecule type" value="Genomic_DNA"/>
</dbReference>
<dbReference type="RefSeq" id="WP_015935353.1">
    <property type="nucleotide sequence ID" value="NC_011891.1"/>
</dbReference>
<dbReference type="SMR" id="B8JBQ0"/>
<dbReference type="KEGG" id="acp:A2cp1_4341"/>
<dbReference type="HOGENOM" id="CLU_019240_0_0_7"/>
<dbReference type="Proteomes" id="UP000007089">
    <property type="component" value="Chromosome"/>
</dbReference>
<dbReference type="GO" id="GO:0050566">
    <property type="term" value="F:asparaginyl-tRNA synthase (glutamine-hydrolyzing) activity"/>
    <property type="evidence" value="ECO:0007669"/>
    <property type="project" value="RHEA"/>
</dbReference>
<dbReference type="GO" id="GO:0005524">
    <property type="term" value="F:ATP binding"/>
    <property type="evidence" value="ECO:0007669"/>
    <property type="project" value="UniProtKB-KW"/>
</dbReference>
<dbReference type="GO" id="GO:0050567">
    <property type="term" value="F:glutaminyl-tRNA synthase (glutamine-hydrolyzing) activity"/>
    <property type="evidence" value="ECO:0007669"/>
    <property type="project" value="UniProtKB-UniRule"/>
</dbReference>
<dbReference type="GO" id="GO:0070681">
    <property type="term" value="P:glutaminyl-tRNAGln biosynthesis via transamidation"/>
    <property type="evidence" value="ECO:0007669"/>
    <property type="project" value="TreeGrafter"/>
</dbReference>
<dbReference type="GO" id="GO:0006412">
    <property type="term" value="P:translation"/>
    <property type="evidence" value="ECO:0007669"/>
    <property type="project" value="UniProtKB-UniRule"/>
</dbReference>
<dbReference type="FunFam" id="1.10.10.410:FF:000001">
    <property type="entry name" value="Aspartyl/glutamyl-tRNA(Asn/Gln) amidotransferase subunit B"/>
    <property type="match status" value="1"/>
</dbReference>
<dbReference type="Gene3D" id="1.10.10.410">
    <property type="match status" value="1"/>
</dbReference>
<dbReference type="Gene3D" id="1.10.150.380">
    <property type="entry name" value="GatB domain, N-terminal subdomain"/>
    <property type="match status" value="1"/>
</dbReference>
<dbReference type="HAMAP" id="MF_00121">
    <property type="entry name" value="GatB"/>
    <property type="match status" value="1"/>
</dbReference>
<dbReference type="InterPro" id="IPR017959">
    <property type="entry name" value="Asn/Gln-tRNA_amidoTrfase_suB/E"/>
</dbReference>
<dbReference type="InterPro" id="IPR006075">
    <property type="entry name" value="Asn/Gln-tRNA_Trfase_suB/E_cat"/>
</dbReference>
<dbReference type="InterPro" id="IPR018027">
    <property type="entry name" value="Asn/Gln_amidotransferase"/>
</dbReference>
<dbReference type="InterPro" id="IPR003789">
    <property type="entry name" value="Asn/Gln_tRNA_amidoTrase-B-like"/>
</dbReference>
<dbReference type="InterPro" id="IPR004413">
    <property type="entry name" value="GatB"/>
</dbReference>
<dbReference type="InterPro" id="IPR042114">
    <property type="entry name" value="GatB_C_1"/>
</dbReference>
<dbReference type="InterPro" id="IPR023168">
    <property type="entry name" value="GatB_Yqey_C_2"/>
</dbReference>
<dbReference type="InterPro" id="IPR017958">
    <property type="entry name" value="Gln-tRNA_amidoTrfase_suB_CS"/>
</dbReference>
<dbReference type="InterPro" id="IPR014746">
    <property type="entry name" value="Gln_synth/guanido_kin_cat_dom"/>
</dbReference>
<dbReference type="NCBIfam" id="TIGR00133">
    <property type="entry name" value="gatB"/>
    <property type="match status" value="1"/>
</dbReference>
<dbReference type="NCBIfam" id="NF004012">
    <property type="entry name" value="PRK05477.1-2"/>
    <property type="match status" value="1"/>
</dbReference>
<dbReference type="NCBIfam" id="NF004014">
    <property type="entry name" value="PRK05477.1-4"/>
    <property type="match status" value="1"/>
</dbReference>
<dbReference type="NCBIfam" id="NF004015">
    <property type="entry name" value="PRK05477.1-5"/>
    <property type="match status" value="1"/>
</dbReference>
<dbReference type="PANTHER" id="PTHR11659">
    <property type="entry name" value="GLUTAMYL-TRNA GLN AMIDOTRANSFERASE SUBUNIT B MITOCHONDRIAL AND PROKARYOTIC PET112-RELATED"/>
    <property type="match status" value="1"/>
</dbReference>
<dbReference type="PANTHER" id="PTHR11659:SF0">
    <property type="entry name" value="GLUTAMYL-TRNA(GLN) AMIDOTRANSFERASE SUBUNIT B, MITOCHONDRIAL"/>
    <property type="match status" value="1"/>
</dbReference>
<dbReference type="Pfam" id="PF02934">
    <property type="entry name" value="GatB_N"/>
    <property type="match status" value="1"/>
</dbReference>
<dbReference type="Pfam" id="PF02637">
    <property type="entry name" value="GatB_Yqey"/>
    <property type="match status" value="1"/>
</dbReference>
<dbReference type="SMART" id="SM00845">
    <property type="entry name" value="GatB_Yqey"/>
    <property type="match status" value="1"/>
</dbReference>
<dbReference type="SUPFAM" id="SSF89095">
    <property type="entry name" value="GatB/YqeY motif"/>
    <property type="match status" value="1"/>
</dbReference>
<dbReference type="SUPFAM" id="SSF55931">
    <property type="entry name" value="Glutamine synthetase/guanido kinase"/>
    <property type="match status" value="1"/>
</dbReference>
<dbReference type="PROSITE" id="PS01234">
    <property type="entry name" value="GATB"/>
    <property type="match status" value="1"/>
</dbReference>
<proteinExistence type="inferred from homology"/>
<name>GATB_ANAD2</name>
<feature type="chain" id="PRO_1000122501" description="Aspartyl/glutamyl-tRNA(Asn/Gln) amidotransferase subunit B">
    <location>
        <begin position="1"/>
        <end position="484"/>
    </location>
</feature>
<gene>
    <name evidence="1" type="primary">gatB</name>
    <name type="ordered locus">A2cp1_4341</name>
</gene>
<protein>
    <recommendedName>
        <fullName evidence="1">Aspartyl/glutamyl-tRNA(Asn/Gln) amidotransferase subunit B</fullName>
        <shortName evidence="1">Asp/Glu-ADT subunit B</shortName>
        <ecNumber evidence="1">6.3.5.-</ecNumber>
    </recommendedName>
</protein>